<protein>
    <recommendedName>
        <fullName>NADH dehydrogenase [ubiquinone] 1 alpha subcomplex subunit 10, mitochondrial</fullName>
    </recommendedName>
    <alternativeName>
        <fullName>Complex I-42kD</fullName>
        <shortName>CI-42kD</shortName>
    </alternativeName>
    <alternativeName>
        <fullName>NADH-ubiquinone oxidoreductase 42 kDa subunit</fullName>
    </alternativeName>
</protein>
<evidence type="ECO:0000250" key="1">
    <source>
        <dbReference type="UniProtKB" id="P34942"/>
    </source>
</evidence>
<evidence type="ECO:0000250" key="2">
    <source>
        <dbReference type="UniProtKB" id="Q99LC3"/>
    </source>
</evidence>
<evidence type="ECO:0000269" key="3">
    <source>
    </source>
</evidence>
<evidence type="ECO:0000269" key="4">
    <source>
    </source>
</evidence>
<evidence type="ECO:0000269" key="5">
    <source>
    </source>
</evidence>
<evidence type="ECO:0000269" key="6">
    <source>
    </source>
</evidence>
<evidence type="ECO:0000303" key="7">
    <source ref="2"/>
</evidence>
<evidence type="ECO:0000305" key="8"/>
<evidence type="ECO:0000305" key="9">
    <source>
    </source>
</evidence>
<accession>O95299</accession>
<accession>Q8WXC9</accession>
<name>NDUAA_HUMAN</name>
<proteinExistence type="evidence at protein level"/>
<gene>
    <name type="primary">NDUFA10</name>
</gene>
<organism>
    <name type="scientific">Homo sapiens</name>
    <name type="common">Human</name>
    <dbReference type="NCBI Taxonomy" id="9606"/>
    <lineage>
        <taxon>Eukaryota</taxon>
        <taxon>Metazoa</taxon>
        <taxon>Chordata</taxon>
        <taxon>Craniata</taxon>
        <taxon>Vertebrata</taxon>
        <taxon>Euteleostomi</taxon>
        <taxon>Mammalia</taxon>
        <taxon>Eutheria</taxon>
        <taxon>Euarchontoglires</taxon>
        <taxon>Primates</taxon>
        <taxon>Haplorrhini</taxon>
        <taxon>Catarrhini</taxon>
        <taxon>Hominidae</taxon>
        <taxon>Homo</taxon>
    </lineage>
</organism>
<feature type="transit peptide" description="Mitochondrion" evidence="1">
    <location>
        <begin position="1"/>
        <end position="35"/>
    </location>
</feature>
<feature type="chain" id="PRO_0000019988" description="NADH dehydrogenase [ubiquinone] 1 alpha subcomplex subunit 10, mitochondrial">
    <location>
        <begin position="36"/>
        <end position="355"/>
    </location>
</feature>
<feature type="modified residue" description="Phosphoserine; by PINK1" evidence="2">
    <location>
        <position position="250"/>
    </location>
</feature>
<feature type="modified residue" description="N6-succinyllysine" evidence="2">
    <location>
        <position position="285"/>
    </location>
</feature>
<feature type="splice variant" id="VSP_056417" description="In isoform 2." evidence="7">
    <original>C</original>
    <variation>CESALQTHFWTGVAGASGKLESGSSEEVLLINERGGRSKPG</variation>
    <location>
        <position position="183"/>
    </location>
</feature>
<feature type="splice variant" id="VSP_056418" description="In isoform 2." evidence="7">
    <location>
        <begin position="214"/>
        <end position="223"/>
    </location>
</feature>
<feature type="splice variant" id="VSP_056419" description="In isoform 2." evidence="7">
    <original>LPGRKYSPGYNTEVGDKWIWLK</original>
    <variation>RLDWTVCFGEESTEVKHQGHLLSVQPGTVALTVGSWLRSCLLGLHWKLLFLFPESPMHTTAFMFLC</variation>
    <location>
        <begin position="334"/>
        <end position="355"/>
    </location>
</feature>
<feature type="sequence variant" id="VAR_034149" description="In dbSNP:rs11541494.">
    <original>A</original>
    <variation>G</variation>
    <location>
        <position position="2"/>
    </location>
</feature>
<feature type="sequence variant" id="VAR_078937" description="In MC1DN22; dbSNP:rs387906873." evidence="4">
    <original>Q</original>
    <variation>R</variation>
    <location>
        <position position="142"/>
    </location>
</feature>
<feature type="sequence variant" id="VAR_081458" description="In MC1DN22; uncertain significance; dbSNP:rs1057519414." evidence="5">
    <original>L</original>
    <variation>P</variation>
    <location>
        <position position="294"/>
    </location>
</feature>
<comment type="function">
    <text evidence="6">Accessory subunit of the mitochondrial membrane respiratory chain NADH dehydrogenase (Complex I), that is believed not to be involved in catalysis. Complex I functions in the transfer of electrons from NADH to the respiratory chain. The immediate electron acceptor for the enzyme is believed to be ubiquinone.</text>
</comment>
<comment type="cofactor">
    <cofactor>
        <name>FAD</name>
        <dbReference type="ChEBI" id="CHEBI:57692"/>
    </cofactor>
    <text>Binds 1 FAD per subunit.</text>
</comment>
<comment type="subunit">
    <text evidence="3 6">Complex I is composed of 45 different subunits. This a component of the hydrophobic protein fraction.</text>
</comment>
<comment type="subcellular location">
    <subcellularLocation>
        <location evidence="9">Mitochondrion matrix</location>
    </subcellularLocation>
</comment>
<comment type="alternative products">
    <event type="alternative splicing"/>
    <isoform>
        <id>O95299-1</id>
        <name>1</name>
        <sequence type="displayed"/>
    </isoform>
    <isoform>
        <id>O95299-2</id>
        <name>2</name>
        <sequence type="described" ref="VSP_056417 VSP_056418 VSP_056419"/>
    </isoform>
</comment>
<comment type="PTM">
    <text evidence="2">Phosphorylation at Ser-250 by PINK1 is required for the binding and/or reduction of the complex I substrate ubiquinone.</text>
</comment>
<comment type="disease" evidence="4 5">
    <disease id="DI-05418">
        <name>Mitochondrial complex I deficiency, nuclear type 22</name>
        <acronym>MC1DN22</acronym>
        <description>A form of mitochondrial complex I deficiency, the most common biochemical signature of mitochondrial disorders, a group of highly heterogeneous conditions characterized by defective oxidative phosphorylation, which collectively affects 1 in 5-10000 live births. Clinical disorders have variable severity, ranging from lethal neonatal disease to adult-onset neurodegenerative disorders. Phenotypes include macrocephaly with progressive leukodystrophy, non-specific encephalopathy, cardiomyopathy, myopathy, liver disease, Leigh syndrome, Leber hereditary optic neuropathy, and some forms of Parkinson disease. MC1DN22 transmission pattern is consistent with autosomal recessive inheritance.</description>
        <dbReference type="MIM" id="618243"/>
    </disease>
    <text>The disease is caused by variants affecting the gene represented in this entry.</text>
</comment>
<comment type="similarity">
    <text evidence="8">Belongs to the complex I NDUFA10 subunit family.</text>
</comment>
<sequence length="355" mass="40751">MALRLLKLAATSASARVVAAGAQRVRGIHSSVQCKLRYGMWHFLLGDKASKRLTERSRVITVDGNICTGKGKLAKEIAEKLGFKHFPEAGIHYPDSTTGDGKPLATDYNGNCSLEKFYDDPRSNDGNSYRLQSWLYSSRLLQYSDALEHLLTTGQGVVLERSIFSDFVFLEAMYNQGFIRKQCVDHYNEVKSVTICDYLPPHLVIYIDVPVPEVQRRIQKKGDPHEMKITSAYLQDIENAYKKTFLPEMSEKCEVLQYSAREAQDSKKVVEDIEYLKFDKGPWLKQDNRTLYHLRLLVQDKFEVLNYTSIPIFLPEVTIGAHQTDRVLHQFRELPGRKYSPGYNTEVGDKWIWLK</sequence>
<keyword id="KW-0002">3D-structure</keyword>
<keyword id="KW-0025">Alternative splicing</keyword>
<keyword id="KW-0225">Disease variant</keyword>
<keyword id="KW-0249">Electron transport</keyword>
<keyword id="KW-0274">FAD</keyword>
<keyword id="KW-0285">Flavoprotein</keyword>
<keyword id="KW-0496">Mitochondrion</keyword>
<keyword id="KW-0597">Phosphoprotein</keyword>
<keyword id="KW-1274">Primary mitochondrial disease</keyword>
<keyword id="KW-1267">Proteomics identification</keyword>
<keyword id="KW-1185">Reference proteome</keyword>
<keyword id="KW-0679">Respiratory chain</keyword>
<keyword id="KW-0809">Transit peptide</keyword>
<keyword id="KW-0813">Transport</keyword>
<dbReference type="EMBL" id="AF087661">
    <property type="protein sequence ID" value="AAD09755.1"/>
    <property type="molecule type" value="mRNA"/>
</dbReference>
<dbReference type="EMBL" id="AF453834">
    <property type="protein sequence ID" value="AAL50984.1"/>
    <property type="molecule type" value="mRNA"/>
</dbReference>
<dbReference type="EMBL" id="AC013469">
    <property type="status" value="NOT_ANNOTATED_CDS"/>
    <property type="molecule type" value="Genomic_DNA"/>
</dbReference>
<dbReference type="EMBL" id="AC114750">
    <property type="status" value="NOT_ANNOTATED_CDS"/>
    <property type="molecule type" value="Genomic_DNA"/>
</dbReference>
<dbReference type="EMBL" id="AC233275">
    <property type="status" value="NOT_ANNOTATED_CDS"/>
    <property type="molecule type" value="Genomic_DNA"/>
</dbReference>
<dbReference type="EMBL" id="BC003417">
    <property type="protein sequence ID" value="AAH03417.1"/>
    <property type="molecule type" value="mRNA"/>
</dbReference>
<dbReference type="CCDS" id="CCDS2531.1">
    <molecule id="O95299-1"/>
</dbReference>
<dbReference type="PIR" id="JE0385">
    <property type="entry name" value="JE0385"/>
</dbReference>
<dbReference type="RefSeq" id="NP_004535.1">
    <molecule id="O95299-1"/>
    <property type="nucleotide sequence ID" value="NM_004544.4"/>
</dbReference>
<dbReference type="PDB" id="5XTC">
    <property type="method" value="EM"/>
    <property type="resolution" value="3.70 A"/>
    <property type="chains" value="w=36-355"/>
</dbReference>
<dbReference type="PDB" id="5XTD">
    <property type="method" value="EM"/>
    <property type="resolution" value="3.70 A"/>
    <property type="chains" value="w=36-355"/>
</dbReference>
<dbReference type="PDB" id="5XTH">
    <property type="method" value="EM"/>
    <property type="resolution" value="3.90 A"/>
    <property type="chains" value="w=36-355"/>
</dbReference>
<dbReference type="PDB" id="5XTI">
    <property type="method" value="EM"/>
    <property type="resolution" value="17.40 A"/>
    <property type="chains" value="Bw/w=36-355"/>
</dbReference>
<dbReference type="PDBsum" id="5XTC"/>
<dbReference type="PDBsum" id="5XTD"/>
<dbReference type="PDBsum" id="5XTH"/>
<dbReference type="PDBsum" id="5XTI"/>
<dbReference type="SMR" id="O95299"/>
<dbReference type="BioGRID" id="110785">
    <property type="interactions" value="169"/>
</dbReference>
<dbReference type="ComplexPortal" id="CPX-577">
    <property type="entry name" value="Mitochondrial respiratory chain complex I"/>
</dbReference>
<dbReference type="CORUM" id="O95299"/>
<dbReference type="FunCoup" id="O95299">
    <property type="interactions" value="1823"/>
</dbReference>
<dbReference type="IntAct" id="O95299">
    <property type="interactions" value="88"/>
</dbReference>
<dbReference type="MINT" id="O95299"/>
<dbReference type="STRING" id="9606.ENSP00000252711"/>
<dbReference type="BindingDB" id="O95299"/>
<dbReference type="ChEMBL" id="CHEMBL2363065"/>
<dbReference type="DrugBank" id="DB00157">
    <property type="generic name" value="NADH"/>
</dbReference>
<dbReference type="DrugCentral" id="O95299"/>
<dbReference type="GlyGen" id="O95299">
    <property type="glycosylation" value="1 site, 1 O-linked glycan (1 site)"/>
</dbReference>
<dbReference type="iPTMnet" id="O95299"/>
<dbReference type="PhosphoSitePlus" id="O95299"/>
<dbReference type="SwissPalm" id="O95299"/>
<dbReference type="BioMuta" id="NDUFA10"/>
<dbReference type="jPOST" id="O95299"/>
<dbReference type="MassIVE" id="O95299"/>
<dbReference type="PaxDb" id="9606-ENSP00000252711"/>
<dbReference type="PeptideAtlas" id="O95299"/>
<dbReference type="PRIDE" id="O95299"/>
<dbReference type="ProteomicsDB" id="50799">
    <molecule id="O95299-1"/>
</dbReference>
<dbReference type="ProteomicsDB" id="75009"/>
<dbReference type="Pumba" id="O95299"/>
<dbReference type="Antibodypedia" id="34509">
    <property type="antibodies" value="193 antibodies from 30 providers"/>
</dbReference>
<dbReference type="DNASU" id="4705"/>
<dbReference type="Ensembl" id="ENST00000252711.7">
    <molecule id="O95299-1"/>
    <property type="protein sequence ID" value="ENSP00000252711.2"/>
    <property type="gene ID" value="ENSG00000130414.13"/>
</dbReference>
<dbReference type="Ensembl" id="ENST00000307300.8">
    <molecule id="O95299-2"/>
    <property type="protein sequence ID" value="ENSP00000302321.4"/>
    <property type="gene ID" value="ENSG00000130414.13"/>
</dbReference>
<dbReference type="Ensembl" id="ENST00000676929.1">
    <molecule id="O95299-1"/>
    <property type="protein sequence ID" value="ENSP00000503956.1"/>
    <property type="gene ID" value="ENSG00000130414.13"/>
</dbReference>
<dbReference type="Ensembl" id="ENST00000678158.1">
    <molecule id="O95299-1"/>
    <property type="protein sequence ID" value="ENSP00000504765.1"/>
    <property type="gene ID" value="ENSG00000130414.13"/>
</dbReference>
<dbReference type="GeneID" id="4705"/>
<dbReference type="KEGG" id="hsa:4705"/>
<dbReference type="MANE-Select" id="ENST00000252711.7">
    <property type="protein sequence ID" value="ENSP00000252711.2"/>
    <property type="RefSeq nucleotide sequence ID" value="NM_004544.4"/>
    <property type="RefSeq protein sequence ID" value="NP_004535.1"/>
</dbReference>
<dbReference type="UCSC" id="uc002vyn.3">
    <molecule id="O95299-1"/>
    <property type="organism name" value="human"/>
</dbReference>
<dbReference type="AGR" id="HGNC:7684"/>
<dbReference type="CTD" id="4705"/>
<dbReference type="DisGeNET" id="4705"/>
<dbReference type="GeneCards" id="NDUFA10"/>
<dbReference type="GeneReviews" id="NDUFA10"/>
<dbReference type="HGNC" id="HGNC:7684">
    <property type="gene designation" value="NDUFA10"/>
</dbReference>
<dbReference type="HPA" id="ENSG00000130414">
    <property type="expression patterns" value="Tissue enhanced (tongue)"/>
</dbReference>
<dbReference type="MalaCards" id="NDUFA10"/>
<dbReference type="MIM" id="603835">
    <property type="type" value="gene"/>
</dbReference>
<dbReference type="MIM" id="618243">
    <property type="type" value="phenotype"/>
</dbReference>
<dbReference type="neXtProt" id="NX_O95299"/>
<dbReference type="OpenTargets" id="ENSG00000130414"/>
<dbReference type="PharmGKB" id="PA31490"/>
<dbReference type="VEuPathDB" id="HostDB:ENSG00000130414"/>
<dbReference type="eggNOG" id="KOG3877">
    <property type="taxonomic scope" value="Eukaryota"/>
</dbReference>
<dbReference type="GeneTree" id="ENSGT00390000016151"/>
<dbReference type="HOGENOM" id="CLU_050591_0_0_1"/>
<dbReference type="InParanoid" id="O95299"/>
<dbReference type="OrthoDB" id="17400at2759"/>
<dbReference type="PAN-GO" id="O95299">
    <property type="GO annotations" value="3 GO annotations based on evolutionary models"/>
</dbReference>
<dbReference type="PhylomeDB" id="O95299"/>
<dbReference type="TreeFam" id="TF314616"/>
<dbReference type="BioCyc" id="MetaCyc:HS05385-MONOMER"/>
<dbReference type="PathwayCommons" id="O95299"/>
<dbReference type="Reactome" id="R-HSA-611105">
    <property type="pathway name" value="Respiratory electron transport"/>
</dbReference>
<dbReference type="Reactome" id="R-HSA-6799198">
    <property type="pathway name" value="Complex I biogenesis"/>
</dbReference>
<dbReference type="SignaLink" id="O95299"/>
<dbReference type="SIGNOR" id="O95299"/>
<dbReference type="BioGRID-ORCS" id="4705">
    <property type="hits" value="181 hits in 1164 CRISPR screens"/>
</dbReference>
<dbReference type="CD-CODE" id="FB4E32DD">
    <property type="entry name" value="Presynaptic clusters and postsynaptic densities"/>
</dbReference>
<dbReference type="ChiTaRS" id="NDUFA10">
    <property type="organism name" value="human"/>
</dbReference>
<dbReference type="GeneWiki" id="NDUFA10"/>
<dbReference type="GenomeRNAi" id="4705"/>
<dbReference type="Pharos" id="O95299">
    <property type="development level" value="Tclin"/>
</dbReference>
<dbReference type="PRO" id="PR:O95299"/>
<dbReference type="Proteomes" id="UP000005640">
    <property type="component" value="Chromosome 2"/>
</dbReference>
<dbReference type="RNAct" id="O95299">
    <property type="molecule type" value="protein"/>
</dbReference>
<dbReference type="Bgee" id="ENSG00000130414">
    <property type="expression patterns" value="Expressed in apex of heart and 204 other cell types or tissues"/>
</dbReference>
<dbReference type="ExpressionAtlas" id="O95299">
    <property type="expression patterns" value="baseline and differential"/>
</dbReference>
<dbReference type="GO" id="GO:0005737">
    <property type="term" value="C:cytoplasm"/>
    <property type="evidence" value="ECO:0000318"/>
    <property type="project" value="GO_Central"/>
</dbReference>
<dbReference type="GO" id="GO:0005743">
    <property type="term" value="C:mitochondrial inner membrane"/>
    <property type="evidence" value="ECO:0000314"/>
    <property type="project" value="ComplexPortal"/>
</dbReference>
<dbReference type="GO" id="GO:0005759">
    <property type="term" value="C:mitochondrial matrix"/>
    <property type="evidence" value="ECO:0007669"/>
    <property type="project" value="UniProtKB-SubCell"/>
</dbReference>
<dbReference type="GO" id="GO:0005739">
    <property type="term" value="C:mitochondrion"/>
    <property type="evidence" value="ECO:0000314"/>
    <property type="project" value="HPA"/>
</dbReference>
<dbReference type="GO" id="GO:0045271">
    <property type="term" value="C:respiratory chain complex I"/>
    <property type="evidence" value="ECO:0000314"/>
    <property type="project" value="UniProtKB"/>
</dbReference>
<dbReference type="GO" id="GO:0008137">
    <property type="term" value="F:NADH dehydrogenase (ubiquinone) activity"/>
    <property type="evidence" value="ECO:0000303"/>
    <property type="project" value="UniProtKB"/>
</dbReference>
<dbReference type="GO" id="GO:0009060">
    <property type="term" value="P:aerobic respiration"/>
    <property type="evidence" value="ECO:0000303"/>
    <property type="project" value="ComplexPortal"/>
</dbReference>
<dbReference type="GO" id="GO:0006120">
    <property type="term" value="P:mitochondrial electron transport, NADH to ubiquinone"/>
    <property type="evidence" value="ECO:0000318"/>
    <property type="project" value="GO_Central"/>
</dbReference>
<dbReference type="GO" id="GO:0042776">
    <property type="term" value="P:proton motive force-driven mitochondrial ATP synthesis"/>
    <property type="evidence" value="ECO:0000303"/>
    <property type="project" value="ComplexPortal"/>
</dbReference>
<dbReference type="CDD" id="cd02030">
    <property type="entry name" value="NDUO42"/>
    <property type="match status" value="1"/>
</dbReference>
<dbReference type="FunFam" id="3.40.50.300:FF:000837">
    <property type="entry name" value="NADH dehydrogenase [ubiquinone] 1 alpha subcomplex subunit 10, mitochondrial"/>
    <property type="match status" value="1"/>
</dbReference>
<dbReference type="Gene3D" id="3.40.50.300">
    <property type="entry name" value="P-loop containing nucleotide triphosphate hydrolases"/>
    <property type="match status" value="1"/>
</dbReference>
<dbReference type="InterPro" id="IPR050566">
    <property type="entry name" value="Deoxyribonucleoside_kinase"/>
</dbReference>
<dbReference type="InterPro" id="IPR031314">
    <property type="entry name" value="DNK_dom"/>
</dbReference>
<dbReference type="InterPro" id="IPR015828">
    <property type="entry name" value="NDUFA10"/>
</dbReference>
<dbReference type="InterPro" id="IPR027417">
    <property type="entry name" value="P-loop_NTPase"/>
</dbReference>
<dbReference type="PANTHER" id="PTHR10513">
    <property type="entry name" value="DEOXYNUCLEOSIDE KINASE"/>
    <property type="match status" value="1"/>
</dbReference>
<dbReference type="PANTHER" id="PTHR10513:SF15">
    <property type="entry name" value="NADH DEHYDROGENASE [UBIQUINONE] 1 ALPHA SUBCOMPLEX SUBUNIT 10, MITOCHONDRIAL"/>
    <property type="match status" value="1"/>
</dbReference>
<dbReference type="Pfam" id="PF01712">
    <property type="entry name" value="dNK"/>
    <property type="match status" value="1"/>
</dbReference>
<dbReference type="PIRSF" id="PIRSF000543">
    <property type="entry name" value="NADH_UQ_42KD"/>
    <property type="match status" value="1"/>
</dbReference>
<dbReference type="SUPFAM" id="SSF52540">
    <property type="entry name" value="P-loop containing nucleoside triphosphate hydrolases"/>
    <property type="match status" value="1"/>
</dbReference>
<reference key="1">
    <citation type="journal article" date="1998" name="Biochem. Biophys. Res. Commun.">
        <title>cDNA of eight nuclear encoded subunits of NADH:ubiquinone oxidoreductase: human complex I cDNA characterization completed.</title>
        <authorList>
            <person name="Loeffen J.L.C.M."/>
            <person name="Triepels R.H."/>
            <person name="van den Heuvel L.P."/>
            <person name="Schuelke M."/>
            <person name="Buskens C.A.F."/>
            <person name="Smeets R.J.P."/>
            <person name="Trijbels J.M.F."/>
            <person name="Smeitink J.A.M."/>
        </authorList>
    </citation>
    <scope>NUCLEOTIDE SEQUENCE [MRNA] (ISOFORM 1)</scope>
</reference>
<reference key="2">
    <citation type="submission" date="2001-11" db="EMBL/GenBank/DDBJ databases">
        <title>Homo sapiens, NADH dehydrogenase (ubiquinone) 1 alpha subcomplex.</title>
        <authorList>
            <person name="Hu W."/>
            <person name="Tang L.-J."/>
            <person name="Shi Y.-W."/>
            <person name="Tian J.-Y."/>
            <person name="Jian Y.-S."/>
        </authorList>
    </citation>
    <scope>NUCLEOTIDE SEQUENCE [MRNA] (ISOFORM 2)</scope>
</reference>
<reference key="3">
    <citation type="journal article" date="2005" name="Nature">
        <title>Generation and annotation of the DNA sequences of human chromosomes 2 and 4.</title>
        <authorList>
            <person name="Hillier L.W."/>
            <person name="Graves T.A."/>
            <person name="Fulton R.S."/>
            <person name="Fulton L.A."/>
            <person name="Pepin K.H."/>
            <person name="Minx P."/>
            <person name="Wagner-McPherson C."/>
            <person name="Layman D."/>
            <person name="Wylie K."/>
            <person name="Sekhon M."/>
            <person name="Becker M.C."/>
            <person name="Fewell G.A."/>
            <person name="Delehaunty K.D."/>
            <person name="Miner T.L."/>
            <person name="Nash W.E."/>
            <person name="Kremitzki C."/>
            <person name="Oddy L."/>
            <person name="Du H."/>
            <person name="Sun H."/>
            <person name="Bradshaw-Cordum H."/>
            <person name="Ali J."/>
            <person name="Carter J."/>
            <person name="Cordes M."/>
            <person name="Harris A."/>
            <person name="Isak A."/>
            <person name="van Brunt A."/>
            <person name="Nguyen C."/>
            <person name="Du F."/>
            <person name="Courtney L."/>
            <person name="Kalicki J."/>
            <person name="Ozersky P."/>
            <person name="Abbott S."/>
            <person name="Armstrong J."/>
            <person name="Belter E.A."/>
            <person name="Caruso L."/>
            <person name="Cedroni M."/>
            <person name="Cotton M."/>
            <person name="Davidson T."/>
            <person name="Desai A."/>
            <person name="Elliott G."/>
            <person name="Erb T."/>
            <person name="Fronick C."/>
            <person name="Gaige T."/>
            <person name="Haakenson W."/>
            <person name="Haglund K."/>
            <person name="Holmes A."/>
            <person name="Harkins R."/>
            <person name="Kim K."/>
            <person name="Kruchowski S.S."/>
            <person name="Strong C.M."/>
            <person name="Grewal N."/>
            <person name="Goyea E."/>
            <person name="Hou S."/>
            <person name="Levy A."/>
            <person name="Martinka S."/>
            <person name="Mead K."/>
            <person name="McLellan M.D."/>
            <person name="Meyer R."/>
            <person name="Randall-Maher J."/>
            <person name="Tomlinson C."/>
            <person name="Dauphin-Kohlberg S."/>
            <person name="Kozlowicz-Reilly A."/>
            <person name="Shah N."/>
            <person name="Swearengen-Shahid S."/>
            <person name="Snider J."/>
            <person name="Strong J.T."/>
            <person name="Thompson J."/>
            <person name="Yoakum M."/>
            <person name="Leonard S."/>
            <person name="Pearman C."/>
            <person name="Trani L."/>
            <person name="Radionenko M."/>
            <person name="Waligorski J.E."/>
            <person name="Wang C."/>
            <person name="Rock S.M."/>
            <person name="Tin-Wollam A.-M."/>
            <person name="Maupin R."/>
            <person name="Latreille P."/>
            <person name="Wendl M.C."/>
            <person name="Yang S.-P."/>
            <person name="Pohl C."/>
            <person name="Wallis J.W."/>
            <person name="Spieth J."/>
            <person name="Bieri T.A."/>
            <person name="Berkowicz N."/>
            <person name="Nelson J.O."/>
            <person name="Osborne J."/>
            <person name="Ding L."/>
            <person name="Meyer R."/>
            <person name="Sabo A."/>
            <person name="Shotland Y."/>
            <person name="Sinha P."/>
            <person name="Wohldmann P.E."/>
            <person name="Cook L.L."/>
            <person name="Hickenbotham M.T."/>
            <person name="Eldred J."/>
            <person name="Williams D."/>
            <person name="Jones T.A."/>
            <person name="She X."/>
            <person name="Ciccarelli F.D."/>
            <person name="Izaurralde E."/>
            <person name="Taylor J."/>
            <person name="Schmutz J."/>
            <person name="Myers R.M."/>
            <person name="Cox D.R."/>
            <person name="Huang X."/>
            <person name="McPherson J.D."/>
            <person name="Mardis E.R."/>
            <person name="Clifton S.W."/>
            <person name="Warren W.C."/>
            <person name="Chinwalla A.T."/>
            <person name="Eddy S.R."/>
            <person name="Marra M.A."/>
            <person name="Ovcharenko I."/>
            <person name="Furey T.S."/>
            <person name="Miller W."/>
            <person name="Eichler E.E."/>
            <person name="Bork P."/>
            <person name="Suyama M."/>
            <person name="Torrents D."/>
            <person name="Waterston R.H."/>
            <person name="Wilson R.K."/>
        </authorList>
    </citation>
    <scope>NUCLEOTIDE SEQUENCE [LARGE SCALE GENOMIC DNA]</scope>
</reference>
<reference key="4">
    <citation type="journal article" date="2004" name="Genome Res.">
        <title>The status, quality, and expansion of the NIH full-length cDNA project: the Mammalian Gene Collection (MGC).</title>
        <authorList>
            <consortium name="The MGC Project Team"/>
        </authorList>
    </citation>
    <scope>NUCLEOTIDE SEQUENCE [LARGE SCALE MRNA] (ISOFORM 1)</scope>
    <source>
        <tissue>Placenta</tissue>
    </source>
</reference>
<reference key="5">
    <citation type="journal article" date="2003" name="J. Biol. Chem.">
        <title>The subunit composition of the human NADH dehydrogenase obtained by rapid one-step immunopurification.</title>
        <authorList>
            <person name="Murray J."/>
            <person name="Zhang B."/>
            <person name="Taylor S.W."/>
            <person name="Oglesbee D."/>
            <person name="Fahy E."/>
            <person name="Marusich M.F."/>
            <person name="Ghosh S.S."/>
            <person name="Capaldi R.A."/>
        </authorList>
    </citation>
    <scope>IDENTIFICATION IN THE NADH-UBIQUINONE OXIDOREDUCTASE COMPLEX</scope>
    <scope>IDENTIFICATION BY MASS SPECTROMETRY</scope>
</reference>
<reference key="6">
    <citation type="journal article" date="2011" name="BMC Syst. Biol.">
        <title>Initial characterization of the human central proteome.</title>
        <authorList>
            <person name="Burkard T.R."/>
            <person name="Planyavsky M."/>
            <person name="Kaupe I."/>
            <person name="Breitwieser F.P."/>
            <person name="Buerckstuemmer T."/>
            <person name="Bennett K.L."/>
            <person name="Superti-Furga G."/>
            <person name="Colinge J."/>
        </authorList>
    </citation>
    <scope>IDENTIFICATION BY MASS SPECTROMETRY [LARGE SCALE ANALYSIS]</scope>
</reference>
<reference key="7">
    <citation type="journal article" date="2011" name="Eur. J. Hum. Genet.">
        <title>NDUFA10 mutations cause complex I deficiency in a patient with Leigh disease.</title>
        <authorList>
            <person name="Hoefs S.J."/>
            <person name="van Spronsen F.J."/>
            <person name="Lenssen E.W."/>
            <person name="Nijtmans L.G."/>
            <person name="Rodenburg R.J."/>
            <person name="Smeitink J.A."/>
            <person name="van den Heuvel L.P."/>
        </authorList>
    </citation>
    <scope>INVOLVEMENT IN MC1DN22</scope>
    <scope>VARIANT MC1DN22 ARG-142</scope>
</reference>
<reference key="8">
    <citation type="journal article" date="2014" name="J. Proteomics">
        <title>An enzyme assisted RP-RPLC approach for in-depth analysis of human liver phosphoproteome.</title>
        <authorList>
            <person name="Bian Y."/>
            <person name="Song C."/>
            <person name="Cheng K."/>
            <person name="Dong M."/>
            <person name="Wang F."/>
            <person name="Huang J."/>
            <person name="Sun D."/>
            <person name="Wang L."/>
            <person name="Ye M."/>
            <person name="Zou H."/>
        </authorList>
    </citation>
    <scope>IDENTIFICATION BY MASS SPECTROMETRY [LARGE SCALE ANALYSIS]</scope>
    <source>
        <tissue>Liver</tissue>
    </source>
</reference>
<reference key="9">
    <citation type="journal article" date="2015" name="Proteomics">
        <title>N-terminome analysis of the human mitochondrial proteome.</title>
        <authorList>
            <person name="Vaca Jacome A.S."/>
            <person name="Rabilloud T."/>
            <person name="Schaeffer-Reiss C."/>
            <person name="Rompais M."/>
            <person name="Ayoub D."/>
            <person name="Lane L."/>
            <person name="Bairoch A."/>
            <person name="Van Dorsselaer A."/>
            <person name="Carapito C."/>
        </authorList>
    </citation>
    <scope>IDENTIFICATION BY MASS SPECTROMETRY [LARGE SCALE ANALYSIS]</scope>
</reference>
<reference key="10">
    <citation type="journal article" date="2016" name="Nature">
        <title>Accessory subunits are integral for assembly and function of human mitochondrial complex I.</title>
        <authorList>
            <person name="Stroud D.A."/>
            <person name="Surgenor E.E."/>
            <person name="Formosa L.E."/>
            <person name="Reljic B."/>
            <person name="Frazier A.E."/>
            <person name="Dibley M.G."/>
            <person name="Osellame L.D."/>
            <person name="Stait T."/>
            <person name="Beilharz T.H."/>
            <person name="Thorburn D.R."/>
            <person name="Salim A."/>
            <person name="Ryan M.T."/>
        </authorList>
    </citation>
    <scope>FUNCTION</scope>
    <scope>IDENTIFICATION IN THE NADH-UBIQUINONE OXIDOREDUCTASE COMPLEX</scope>
</reference>
<reference key="11">
    <citation type="journal article" date="2016" name="PLoS Genet.">
        <title>A comprehensive genomic analysis reveals the genetic landscape of mitochondrial respiratory chain complex deficiencies.</title>
        <authorList>
            <person name="Kohda M."/>
            <person name="Tokuzawa Y."/>
            <person name="Kishita Y."/>
            <person name="Nyuzuki H."/>
            <person name="Moriyama Y."/>
            <person name="Mizuno Y."/>
            <person name="Hirata T."/>
            <person name="Yatsuka Y."/>
            <person name="Yamashita-Sugahara Y."/>
            <person name="Nakachi Y."/>
            <person name="Kato H."/>
            <person name="Okuda A."/>
            <person name="Tamaru S."/>
            <person name="Borna N.N."/>
            <person name="Banshoya K."/>
            <person name="Aigaki T."/>
            <person name="Sato-Miyata Y."/>
            <person name="Ohnuma K."/>
            <person name="Suzuki T."/>
            <person name="Nagao A."/>
            <person name="Maehata H."/>
            <person name="Matsuda F."/>
            <person name="Higasa K."/>
            <person name="Nagasaki M."/>
            <person name="Yasuda J."/>
            <person name="Yamamoto M."/>
            <person name="Fushimi T."/>
            <person name="Shimura M."/>
            <person name="Kaiho-Ichimoto K."/>
            <person name="Harashima H."/>
            <person name="Yamazaki T."/>
            <person name="Mori M."/>
            <person name="Murayama K."/>
            <person name="Ohtake A."/>
            <person name="Okazaki Y."/>
        </authorList>
    </citation>
    <scope>INVOLVEMENT IN MC1DN22</scope>
    <scope>VARIANT MC1DN22 PRO-294</scope>
</reference>